<keyword id="KW-0030">Aminoacyl-tRNA synthetase</keyword>
<keyword id="KW-0067">ATP-binding</keyword>
<keyword id="KW-0175">Coiled coil</keyword>
<keyword id="KW-0963">Cytoplasm</keyword>
<keyword id="KW-0436">Ligase</keyword>
<keyword id="KW-0547">Nucleotide-binding</keyword>
<keyword id="KW-0648">Protein biosynthesis</keyword>
<keyword id="KW-1185">Reference proteome</keyword>
<name>SYV_LEGPH</name>
<dbReference type="EC" id="6.1.1.9" evidence="1"/>
<dbReference type="EMBL" id="AE017354">
    <property type="protein sequence ID" value="AAU26808.1"/>
    <property type="molecule type" value="Genomic_DNA"/>
</dbReference>
<dbReference type="RefSeq" id="WP_010946456.1">
    <property type="nucleotide sequence ID" value="NC_002942.5"/>
</dbReference>
<dbReference type="RefSeq" id="YP_094755.1">
    <property type="nucleotide sequence ID" value="NC_002942.5"/>
</dbReference>
<dbReference type="SMR" id="Q5ZXL2"/>
<dbReference type="STRING" id="272624.lpg0719"/>
<dbReference type="PaxDb" id="272624-lpg0719"/>
<dbReference type="KEGG" id="lpn:lpg0719"/>
<dbReference type="PATRIC" id="fig|272624.6.peg.741"/>
<dbReference type="eggNOG" id="COG0525">
    <property type="taxonomic scope" value="Bacteria"/>
</dbReference>
<dbReference type="HOGENOM" id="CLU_001493_0_2_6"/>
<dbReference type="OrthoDB" id="9810365at2"/>
<dbReference type="Proteomes" id="UP000000609">
    <property type="component" value="Chromosome"/>
</dbReference>
<dbReference type="GO" id="GO:0005829">
    <property type="term" value="C:cytosol"/>
    <property type="evidence" value="ECO:0007669"/>
    <property type="project" value="TreeGrafter"/>
</dbReference>
<dbReference type="GO" id="GO:0002161">
    <property type="term" value="F:aminoacyl-tRNA deacylase activity"/>
    <property type="evidence" value="ECO:0007669"/>
    <property type="project" value="InterPro"/>
</dbReference>
<dbReference type="GO" id="GO:0005524">
    <property type="term" value="F:ATP binding"/>
    <property type="evidence" value="ECO:0007669"/>
    <property type="project" value="UniProtKB-UniRule"/>
</dbReference>
<dbReference type="GO" id="GO:0004832">
    <property type="term" value="F:valine-tRNA ligase activity"/>
    <property type="evidence" value="ECO:0007669"/>
    <property type="project" value="UniProtKB-UniRule"/>
</dbReference>
<dbReference type="GO" id="GO:0006438">
    <property type="term" value="P:valyl-tRNA aminoacylation"/>
    <property type="evidence" value="ECO:0007669"/>
    <property type="project" value="UniProtKB-UniRule"/>
</dbReference>
<dbReference type="CDD" id="cd07962">
    <property type="entry name" value="Anticodon_Ia_Val"/>
    <property type="match status" value="1"/>
</dbReference>
<dbReference type="CDD" id="cd00817">
    <property type="entry name" value="ValRS_core"/>
    <property type="match status" value="1"/>
</dbReference>
<dbReference type="FunFam" id="1.10.287.380:FF:000001">
    <property type="entry name" value="Valine--tRNA ligase"/>
    <property type="match status" value="1"/>
</dbReference>
<dbReference type="FunFam" id="3.40.50.620:FF:000073">
    <property type="entry name" value="Valine--tRNA ligase"/>
    <property type="match status" value="1"/>
</dbReference>
<dbReference type="FunFam" id="1.10.730.10:FF:000009">
    <property type="entry name" value="Valine--tRNA ligase, mitochondrial"/>
    <property type="match status" value="1"/>
</dbReference>
<dbReference type="FunFam" id="3.40.50.620:FF:000020">
    <property type="entry name" value="Valine--tRNA ligase, mitochondrial"/>
    <property type="match status" value="1"/>
</dbReference>
<dbReference type="FunFam" id="3.90.740.10:FF:000005">
    <property type="entry name" value="Valine--tRNA ligase, mitochondrial"/>
    <property type="match status" value="1"/>
</dbReference>
<dbReference type="Gene3D" id="3.40.50.620">
    <property type="entry name" value="HUPs"/>
    <property type="match status" value="2"/>
</dbReference>
<dbReference type="Gene3D" id="1.10.730.10">
    <property type="entry name" value="Isoleucyl-tRNA Synthetase, Domain 1"/>
    <property type="match status" value="1"/>
</dbReference>
<dbReference type="Gene3D" id="1.10.287.380">
    <property type="entry name" value="Valyl-tRNA synthetase, C-terminal domain"/>
    <property type="match status" value="1"/>
</dbReference>
<dbReference type="HAMAP" id="MF_02004">
    <property type="entry name" value="Val_tRNA_synth_type1"/>
    <property type="match status" value="1"/>
</dbReference>
<dbReference type="InterPro" id="IPR001412">
    <property type="entry name" value="aa-tRNA-synth_I_CS"/>
</dbReference>
<dbReference type="InterPro" id="IPR002300">
    <property type="entry name" value="aa-tRNA-synth_Ia"/>
</dbReference>
<dbReference type="InterPro" id="IPR033705">
    <property type="entry name" value="Anticodon_Ia_Val"/>
</dbReference>
<dbReference type="InterPro" id="IPR013155">
    <property type="entry name" value="M/V/L/I-tRNA-synth_anticd-bd"/>
</dbReference>
<dbReference type="InterPro" id="IPR014729">
    <property type="entry name" value="Rossmann-like_a/b/a_fold"/>
</dbReference>
<dbReference type="InterPro" id="IPR010978">
    <property type="entry name" value="tRNA-bd_arm"/>
</dbReference>
<dbReference type="InterPro" id="IPR009080">
    <property type="entry name" value="tRNAsynth_Ia_anticodon-bd"/>
</dbReference>
<dbReference type="InterPro" id="IPR037118">
    <property type="entry name" value="Val-tRNA_synth_C_sf"/>
</dbReference>
<dbReference type="InterPro" id="IPR019499">
    <property type="entry name" value="Val-tRNA_synth_tRNA-bd"/>
</dbReference>
<dbReference type="InterPro" id="IPR009008">
    <property type="entry name" value="Val/Leu/Ile-tRNA-synth_edit"/>
</dbReference>
<dbReference type="InterPro" id="IPR002303">
    <property type="entry name" value="Valyl-tRNA_ligase"/>
</dbReference>
<dbReference type="NCBIfam" id="NF004349">
    <property type="entry name" value="PRK05729.1"/>
    <property type="match status" value="1"/>
</dbReference>
<dbReference type="NCBIfam" id="TIGR00422">
    <property type="entry name" value="valS"/>
    <property type="match status" value="1"/>
</dbReference>
<dbReference type="PANTHER" id="PTHR11946:SF93">
    <property type="entry name" value="VALINE--TRNA LIGASE, CHLOROPLASTIC_MITOCHONDRIAL 2"/>
    <property type="match status" value="1"/>
</dbReference>
<dbReference type="PANTHER" id="PTHR11946">
    <property type="entry name" value="VALYL-TRNA SYNTHETASES"/>
    <property type="match status" value="1"/>
</dbReference>
<dbReference type="Pfam" id="PF08264">
    <property type="entry name" value="Anticodon_1"/>
    <property type="match status" value="1"/>
</dbReference>
<dbReference type="Pfam" id="PF00133">
    <property type="entry name" value="tRNA-synt_1"/>
    <property type="match status" value="1"/>
</dbReference>
<dbReference type="Pfam" id="PF10458">
    <property type="entry name" value="Val_tRNA-synt_C"/>
    <property type="match status" value="1"/>
</dbReference>
<dbReference type="PRINTS" id="PR00986">
    <property type="entry name" value="TRNASYNTHVAL"/>
</dbReference>
<dbReference type="SUPFAM" id="SSF47323">
    <property type="entry name" value="Anticodon-binding domain of a subclass of class I aminoacyl-tRNA synthetases"/>
    <property type="match status" value="1"/>
</dbReference>
<dbReference type="SUPFAM" id="SSF52374">
    <property type="entry name" value="Nucleotidylyl transferase"/>
    <property type="match status" value="1"/>
</dbReference>
<dbReference type="SUPFAM" id="SSF46589">
    <property type="entry name" value="tRNA-binding arm"/>
    <property type="match status" value="1"/>
</dbReference>
<dbReference type="SUPFAM" id="SSF50677">
    <property type="entry name" value="ValRS/IleRS/LeuRS editing domain"/>
    <property type="match status" value="1"/>
</dbReference>
<dbReference type="PROSITE" id="PS00178">
    <property type="entry name" value="AA_TRNA_LIGASE_I"/>
    <property type="match status" value="1"/>
</dbReference>
<comment type="function">
    <text evidence="1">Catalyzes the attachment of valine to tRNA(Val). As ValRS can inadvertently accommodate and process structurally similar amino acids such as threonine, to avoid such errors, it has a 'posttransfer' editing activity that hydrolyzes mischarged Thr-tRNA(Val) in a tRNA-dependent manner.</text>
</comment>
<comment type="catalytic activity">
    <reaction evidence="1">
        <text>tRNA(Val) + L-valine + ATP = L-valyl-tRNA(Val) + AMP + diphosphate</text>
        <dbReference type="Rhea" id="RHEA:10704"/>
        <dbReference type="Rhea" id="RHEA-COMP:9672"/>
        <dbReference type="Rhea" id="RHEA-COMP:9708"/>
        <dbReference type="ChEBI" id="CHEBI:30616"/>
        <dbReference type="ChEBI" id="CHEBI:33019"/>
        <dbReference type="ChEBI" id="CHEBI:57762"/>
        <dbReference type="ChEBI" id="CHEBI:78442"/>
        <dbReference type="ChEBI" id="CHEBI:78537"/>
        <dbReference type="ChEBI" id="CHEBI:456215"/>
        <dbReference type="EC" id="6.1.1.9"/>
    </reaction>
</comment>
<comment type="subunit">
    <text evidence="1">Monomer.</text>
</comment>
<comment type="subcellular location">
    <subcellularLocation>
        <location evidence="1">Cytoplasm</location>
    </subcellularLocation>
</comment>
<comment type="domain">
    <text evidence="1">ValRS has two distinct active sites: one for aminoacylation and one for editing. The misactivated threonine is translocated from the active site to the editing site.</text>
</comment>
<comment type="domain">
    <text evidence="1">The C-terminal coiled-coil domain is crucial for aminoacylation activity.</text>
</comment>
<comment type="similarity">
    <text evidence="1">Belongs to the class-I aminoacyl-tRNA synthetase family. ValS type 1 subfamily.</text>
</comment>
<reference key="1">
    <citation type="journal article" date="2004" name="Science">
        <title>The genomic sequence of the accidental pathogen Legionella pneumophila.</title>
        <authorList>
            <person name="Chien M."/>
            <person name="Morozova I."/>
            <person name="Shi S."/>
            <person name="Sheng H."/>
            <person name="Chen J."/>
            <person name="Gomez S.M."/>
            <person name="Asamani G."/>
            <person name="Hill K."/>
            <person name="Nuara J."/>
            <person name="Feder M."/>
            <person name="Rineer J."/>
            <person name="Greenberg J.J."/>
            <person name="Steshenko V."/>
            <person name="Park S.H."/>
            <person name="Zhao B."/>
            <person name="Teplitskaya E."/>
            <person name="Edwards J.R."/>
            <person name="Pampou S."/>
            <person name="Georghiou A."/>
            <person name="Chou I.-C."/>
            <person name="Iannuccilli W."/>
            <person name="Ulz M.E."/>
            <person name="Kim D.H."/>
            <person name="Geringer-Sameth A."/>
            <person name="Goldsberry C."/>
            <person name="Morozov P."/>
            <person name="Fischer S.G."/>
            <person name="Segal G."/>
            <person name="Qu X."/>
            <person name="Rzhetsky A."/>
            <person name="Zhang P."/>
            <person name="Cayanis E."/>
            <person name="De Jong P.J."/>
            <person name="Ju J."/>
            <person name="Kalachikov S."/>
            <person name="Shuman H.A."/>
            <person name="Russo J.J."/>
        </authorList>
    </citation>
    <scope>NUCLEOTIDE SEQUENCE [LARGE SCALE GENOMIC DNA]</scope>
    <source>
        <strain>Philadelphia 1 / ATCC 33152 / DSM 7513</strain>
    </source>
</reference>
<evidence type="ECO:0000255" key="1">
    <source>
        <dbReference type="HAMAP-Rule" id="MF_02004"/>
    </source>
</evidence>
<organism>
    <name type="scientific">Legionella pneumophila subsp. pneumophila (strain Philadelphia 1 / ATCC 33152 / DSM 7513)</name>
    <dbReference type="NCBI Taxonomy" id="272624"/>
    <lineage>
        <taxon>Bacteria</taxon>
        <taxon>Pseudomonadati</taxon>
        <taxon>Pseudomonadota</taxon>
        <taxon>Gammaproteobacteria</taxon>
        <taxon>Legionellales</taxon>
        <taxon>Legionellaceae</taxon>
        <taxon>Legionella</taxon>
    </lineage>
</organism>
<protein>
    <recommendedName>
        <fullName evidence="1">Valine--tRNA ligase</fullName>
        <ecNumber evidence="1">6.1.1.9</ecNumber>
    </recommendedName>
    <alternativeName>
        <fullName evidence="1">Valyl-tRNA synthetase</fullName>
        <shortName evidence="1">ValRS</shortName>
    </alternativeName>
</protein>
<gene>
    <name evidence="1" type="primary">valS</name>
    <name type="ordered locus">lpg0719</name>
</gene>
<accession>Q5ZXL2</accession>
<feature type="chain" id="PRO_0000224496" description="Valine--tRNA ligase">
    <location>
        <begin position="1"/>
        <end position="921"/>
    </location>
</feature>
<feature type="coiled-coil region" evidence="1">
    <location>
        <begin position="849"/>
        <end position="921"/>
    </location>
</feature>
<feature type="short sequence motif" description="'HIGH' region">
    <location>
        <begin position="40"/>
        <end position="50"/>
    </location>
</feature>
<feature type="short sequence motif" description="'KMSKS' region">
    <location>
        <begin position="522"/>
        <end position="526"/>
    </location>
</feature>
<feature type="binding site" evidence="1">
    <location>
        <position position="525"/>
    </location>
    <ligand>
        <name>ATP</name>
        <dbReference type="ChEBI" id="CHEBI:30616"/>
    </ligand>
</feature>
<sequence>MDKTYSPEAIEKALYKKWESHHYFQPRGEGKRFCIMLPPPNVTGSLHMGHGFQHTIMDALTRYHRMLGDKTLWQPGTDHAGISTQLVVERQLEAQGVSRKDLTREQFLDKVWQWKEESGNTITQQMRRLGASVDWSRERFTMDEGLSAAVQKVFVQLYEEGLIYRGTRLVNWDPKLGTAVSDLEVLSEEEDGFLWHIRYPVVDSEEFLIVATTRPETLLGDCAVAIHPDDSRFRHLIGKQVHLPLCDRTIPVIADDYVDKEFGSGCVKITPAHDFNDHEVGKRHQLPQINILTKKGTINKNAPLKYQGMDRFVAREQIIKDLEKEGLLAKTEPHKLKVPRGEKSNVIIEPLLTDQWYVKTKPLAEPAIAAVKKGDIRFIPETWDKTYFQWMDNIEDWCISRQLWWGHRIPAWYDNHGNIYVGYSENDVRFKHKIDQSTPLKQDEDVLDTWFSSALWPFSTLGWPERTPELEQFYPTSVLVTGFDIIFFWVARMIMMGLKFTGKIPFKEVFITGLIRDSEGHKMSKSKGNVLDPLDIVDGIDLDSLIAKRTSNLMLNSVRDRITKATRKEFPEGISAYGTDALRFTYCSLASTGRNVRFDLGRVEGYRNFCNKLWNAARYVLLNTDEEQIDFGDGAFQYSPADQWILSRLQNTVSKVHHYFETYRFDLLANTLYEFVWHEYCDWYLELSKPILQDDQALSAMKRGTRRTLIHVLDQILKLLHPLMPFITEEIWQKTTKFTSENGISIMLSTYPKVNEEFINPAIEEELDWLKSAIQSLRTIRSEMSISPAKLIPLYIRNITPELKERIAKYEKILKTLSKIDKINYLAPDEKVPVSATAVLGEIELLIPMADLIDKEAELSRLNKELAKLNKDIELAQGKLNNPKFTDKAPEEIIAKEKDKLAQAQVAKDKLLQHKNRIESL</sequence>
<proteinExistence type="inferred from homology"/>